<feature type="initiator methionine" description="Removed" evidence="1">
    <location>
        <position position="1"/>
    </location>
</feature>
<feature type="chain" id="PRO_0000221296" description="Histone H3">
    <location>
        <begin position="2"/>
        <end position="136"/>
    </location>
</feature>
<feature type="region of interest" description="Disordered" evidence="2">
    <location>
        <begin position="1"/>
        <end position="42"/>
    </location>
</feature>
<feature type="compositionally biased region" description="Low complexity" evidence="2">
    <location>
        <begin position="22"/>
        <end position="33"/>
    </location>
</feature>
<feature type="modified residue" description="N6-methylated lysine" evidence="1">
    <location>
        <position position="5"/>
    </location>
</feature>
<feature type="modified residue" description="N6-acetyllysine; alternate" evidence="1">
    <location>
        <position position="10"/>
    </location>
</feature>
<feature type="modified residue" description="N6-methylated lysine; alternate" evidence="1">
    <location>
        <position position="10"/>
    </location>
</feature>
<feature type="modified residue" description="Phosphoserine" evidence="1">
    <location>
        <position position="11"/>
    </location>
</feature>
<feature type="modified residue" description="N6-acetyllysine" evidence="1">
    <location>
        <position position="15"/>
    </location>
</feature>
<feature type="modified residue" description="N6-acetyllysine" evidence="1">
    <location>
        <position position="24"/>
    </location>
</feature>
<feature type="modified residue" description="N6-methylated lysine" evidence="1">
    <location>
        <position position="28"/>
    </location>
</feature>
<feature type="modified residue" description="N6-methylated lysine" evidence="1">
    <location>
        <position position="37"/>
    </location>
</feature>
<feature type="modified residue" description="N6-methylated lysine" evidence="1">
    <location>
        <position position="80"/>
    </location>
</feature>
<feature type="helix" evidence="4">
    <location>
        <begin position="5"/>
        <end position="12"/>
    </location>
</feature>
<feature type="helix" evidence="4">
    <location>
        <begin position="18"/>
        <end position="25"/>
    </location>
</feature>
<reference key="1">
    <citation type="journal article" date="1990" name="Gene">
        <title>Nucleotide sequence of the histone H3-encoding gene from the scleractinian coral Acropora formosa (Cnidaria: Scleractinia).</title>
        <authorList>
            <person name="Miller D.J."/>
            <person name="McMillan J."/>
            <person name="Miles A."/>
            <person name="ten Lohuis M."/>
            <person name="Mahony T."/>
        </authorList>
    </citation>
    <scope>NUCLEOTIDE SEQUENCE [GENOMIC DNA]</scope>
</reference>
<reference key="2">
    <citation type="journal article" date="1993" name="J. Mol. Evol.">
        <title>Nucleotide sequence of the histone gene cluster in the coral Acropora formosa (Cnidaria; Scleractinia): features of histone gene structure and organization are common to diploblastic and triploblastic metazoans.</title>
        <authorList>
            <person name="Miller D.J."/>
            <person name="Harrison P.L."/>
            <person name="Mahony T.J."/>
            <person name="McMillan J.P."/>
            <person name="Miles A."/>
            <person name="Odorico D.M."/>
            <person name="ten Lohuis M.R."/>
        </authorList>
    </citation>
    <scope>NUCLEOTIDE SEQUENCE [GENOMIC DNA]</scope>
</reference>
<protein>
    <recommendedName>
        <fullName>Histone H3</fullName>
    </recommendedName>
</protein>
<organism>
    <name type="scientific">Acropora formosa</name>
    <name type="common">Staghorn coral</name>
    <dbReference type="NCBI Taxonomy" id="126732"/>
    <lineage>
        <taxon>Eukaryota</taxon>
        <taxon>Metazoa</taxon>
        <taxon>Cnidaria</taxon>
        <taxon>Anthozoa</taxon>
        <taxon>Hexacorallia</taxon>
        <taxon>Scleractinia</taxon>
        <taxon>Astrocoeniina</taxon>
        <taxon>Acroporidae</taxon>
        <taxon>Acropora</taxon>
    </lineage>
</organism>
<dbReference type="EMBL" id="M60509">
    <property type="protein sequence ID" value="AAA64958.1"/>
    <property type="molecule type" value="Genomic_DNA"/>
</dbReference>
<dbReference type="EMBL" id="L11067">
    <property type="protein sequence ID" value="AAC37352.1"/>
    <property type="molecule type" value="Genomic_DNA"/>
</dbReference>
<dbReference type="EMBL" id="S67324">
    <property type="protein sequence ID" value="AAB28736.1"/>
    <property type="molecule type" value="Genomic_DNA"/>
</dbReference>
<dbReference type="PIR" id="JQ0757">
    <property type="entry name" value="JQ0757"/>
</dbReference>
<dbReference type="PDB" id="6LSB">
    <property type="method" value="X-ray"/>
    <property type="resolution" value="2.00 A"/>
    <property type="chains" value="B=2-26"/>
</dbReference>
<dbReference type="PDBsum" id="6LSB"/>
<dbReference type="BMRB" id="P22843"/>
<dbReference type="SMR" id="P22843"/>
<dbReference type="GO" id="GO:0000786">
    <property type="term" value="C:nucleosome"/>
    <property type="evidence" value="ECO:0007669"/>
    <property type="project" value="UniProtKB-KW"/>
</dbReference>
<dbReference type="GO" id="GO:0005634">
    <property type="term" value="C:nucleus"/>
    <property type="evidence" value="ECO:0007669"/>
    <property type="project" value="UniProtKB-SubCell"/>
</dbReference>
<dbReference type="GO" id="GO:0003677">
    <property type="term" value="F:DNA binding"/>
    <property type="evidence" value="ECO:0007669"/>
    <property type="project" value="UniProtKB-KW"/>
</dbReference>
<dbReference type="GO" id="GO:0046982">
    <property type="term" value="F:protein heterodimerization activity"/>
    <property type="evidence" value="ECO:0007669"/>
    <property type="project" value="InterPro"/>
</dbReference>
<dbReference type="GO" id="GO:0030527">
    <property type="term" value="F:structural constituent of chromatin"/>
    <property type="evidence" value="ECO:0007669"/>
    <property type="project" value="InterPro"/>
</dbReference>
<dbReference type="CDD" id="cd22911">
    <property type="entry name" value="HFD_H3"/>
    <property type="match status" value="1"/>
</dbReference>
<dbReference type="FunFam" id="1.10.20.10:FF:000078">
    <property type="entry name" value="Histone H3"/>
    <property type="match status" value="1"/>
</dbReference>
<dbReference type="FunFam" id="1.10.20.10:FF:000044">
    <property type="entry name" value="Histone H3.3"/>
    <property type="match status" value="1"/>
</dbReference>
<dbReference type="Gene3D" id="1.10.20.10">
    <property type="entry name" value="Histone, subunit A"/>
    <property type="match status" value="1"/>
</dbReference>
<dbReference type="InterPro" id="IPR009072">
    <property type="entry name" value="Histone-fold"/>
</dbReference>
<dbReference type="InterPro" id="IPR007125">
    <property type="entry name" value="Histone_H2A/H2B/H3"/>
</dbReference>
<dbReference type="InterPro" id="IPR000164">
    <property type="entry name" value="Histone_H3/CENP-A"/>
</dbReference>
<dbReference type="PANTHER" id="PTHR11426">
    <property type="entry name" value="HISTONE H3"/>
    <property type="match status" value="1"/>
</dbReference>
<dbReference type="Pfam" id="PF00125">
    <property type="entry name" value="Histone"/>
    <property type="match status" value="1"/>
</dbReference>
<dbReference type="PRINTS" id="PR00622">
    <property type="entry name" value="HISTONEH3"/>
</dbReference>
<dbReference type="SMART" id="SM00428">
    <property type="entry name" value="H3"/>
    <property type="match status" value="1"/>
</dbReference>
<dbReference type="SUPFAM" id="SSF47113">
    <property type="entry name" value="Histone-fold"/>
    <property type="match status" value="1"/>
</dbReference>
<dbReference type="PROSITE" id="PS00322">
    <property type="entry name" value="HISTONE_H3_1"/>
    <property type="match status" value="1"/>
</dbReference>
<dbReference type="PROSITE" id="PS00959">
    <property type="entry name" value="HISTONE_H3_2"/>
    <property type="match status" value="1"/>
</dbReference>
<name>H3_ACRFO</name>
<accession>P22843</accession>
<sequence length="136" mass="15285">MARTKQTARKSTGGKAPRKQLATKAAAKSAPATGGVKKPHRYRPGTVALREIRRYQKSTELLIRKLPFQRLVREIAQDFKTDLRFQSSAVLALQEASEAYLVGLFEDTNLCAIHAKRVTIMPKDIQLARRIRGERA</sequence>
<evidence type="ECO:0000250" key="1"/>
<evidence type="ECO:0000256" key="2">
    <source>
        <dbReference type="SAM" id="MobiDB-lite"/>
    </source>
</evidence>
<evidence type="ECO:0000305" key="3"/>
<evidence type="ECO:0007829" key="4">
    <source>
        <dbReference type="PDB" id="6LSB"/>
    </source>
</evidence>
<proteinExistence type="evidence at protein level"/>
<comment type="function">
    <text>Core component of nucleosome. Nucleosomes wrap and compact DNA into chromatin, limiting DNA accessibility to the cellular machineries which require DNA as a template. Histones thereby play a central role in transcription regulation, DNA repair, DNA replication and chromosomal stability. DNA accessibility is regulated via a complex set of post-translational modifications of histones, also called histone code, and nucleosome remodeling.</text>
</comment>
<comment type="subunit">
    <text>The nucleosome is a histone octamer containing two molecules each of H2A, H2B, H3 and H4 assembled in one H3-H4 heterotetramer and two H2A-H2B heterodimers. The octamer wraps approximately 147 bp of DNA.</text>
</comment>
<comment type="subcellular location">
    <subcellularLocation>
        <location evidence="1">Nucleus</location>
    </subcellularLocation>
    <subcellularLocation>
        <location evidence="1">Chromosome</location>
    </subcellularLocation>
</comment>
<comment type="PTM">
    <text evidence="1">Acetylation is generally linked to gene activation.</text>
</comment>
<comment type="PTM">
    <text evidence="1">Methylation at Lys-5 is linked to gene activation. Methylation at Lys-10 is linked to gene repression (By similarity).</text>
</comment>
<comment type="similarity">
    <text evidence="3">Belongs to the histone H3 family.</text>
</comment>
<keyword id="KW-0002">3D-structure</keyword>
<keyword id="KW-0007">Acetylation</keyword>
<keyword id="KW-0158">Chromosome</keyword>
<keyword id="KW-0238">DNA-binding</keyword>
<keyword id="KW-0488">Methylation</keyword>
<keyword id="KW-0544">Nucleosome core</keyword>
<keyword id="KW-0539">Nucleus</keyword>
<keyword id="KW-0597">Phosphoprotein</keyword>